<accession>Q2TA39</accession>
<proteinExistence type="evidence at transcript level"/>
<comment type="subunit">
    <text evidence="1">Component of the U11/U12 snRNPs that are part of the U12-type spliceosome.</text>
</comment>
<comment type="subcellular location">
    <subcellularLocation>
        <location evidence="1">Nucleus</location>
    </subcellularLocation>
</comment>
<organism>
    <name type="scientific">Bos taurus</name>
    <name type="common">Bovine</name>
    <dbReference type="NCBI Taxonomy" id="9913"/>
    <lineage>
        <taxon>Eukaryota</taxon>
        <taxon>Metazoa</taxon>
        <taxon>Chordata</taxon>
        <taxon>Craniata</taxon>
        <taxon>Vertebrata</taxon>
        <taxon>Euteleostomi</taxon>
        <taxon>Mammalia</taxon>
        <taxon>Eutheria</taxon>
        <taxon>Laurasiatheria</taxon>
        <taxon>Artiodactyla</taxon>
        <taxon>Ruminantia</taxon>
        <taxon>Pecora</taxon>
        <taxon>Bovidae</taxon>
        <taxon>Bovinae</taxon>
        <taxon>Bos</taxon>
    </lineage>
</organism>
<name>ZMAT5_BOVIN</name>
<sequence length="170" mass="19852">MGKRYFCDYCDRSFQDNLHNRKKHLNGLQHLKAKKLWYDMFRDAAAILLDEQNKRPCRKFLLTGQCDFGSNCRFSHMSERDLQELSVQVEEERRAREWPLDVAELPEVCLEDWLEKRAKRLSSAPSSRAEPVRATVFQYPVGWPPVQELPPSLRAPPPGGWPLQPSVQWG</sequence>
<protein>
    <recommendedName>
        <fullName>Zinc finger matrin-type protein 5</fullName>
    </recommendedName>
    <alternativeName>
        <fullName>U11/U12 small nuclear ribonucleoprotein 20 kDa protein</fullName>
        <shortName>U11/U12 snRNP 20 kDa protein</shortName>
    </alternativeName>
</protein>
<dbReference type="EMBL" id="BC111131">
    <property type="protein sequence ID" value="AAI11132.1"/>
    <property type="molecule type" value="mRNA"/>
</dbReference>
<dbReference type="RefSeq" id="NP_001033299.1">
    <property type="nucleotide sequence ID" value="NM_001038210.2"/>
</dbReference>
<dbReference type="RefSeq" id="XP_005218156.1">
    <property type="nucleotide sequence ID" value="XM_005218099.5"/>
</dbReference>
<dbReference type="SMR" id="Q2TA39"/>
<dbReference type="FunCoup" id="Q2TA39">
    <property type="interactions" value="1195"/>
</dbReference>
<dbReference type="STRING" id="9913.ENSBTAP00000074278"/>
<dbReference type="PaxDb" id="9913-ENSBTAP00000023779"/>
<dbReference type="Ensembl" id="ENSBTAT00000023779.5">
    <property type="protein sequence ID" value="ENSBTAP00000023779.4"/>
    <property type="gene ID" value="ENSBTAG00000017890.6"/>
</dbReference>
<dbReference type="GeneID" id="616095"/>
<dbReference type="KEGG" id="bta:616095"/>
<dbReference type="CTD" id="55954"/>
<dbReference type="VEuPathDB" id="HostDB:ENSBTAG00000017890"/>
<dbReference type="VGNC" id="VGNC:37194">
    <property type="gene designation" value="ZMAT5"/>
</dbReference>
<dbReference type="eggNOG" id="KOG3454">
    <property type="taxonomic scope" value="Eukaryota"/>
</dbReference>
<dbReference type="GeneTree" id="ENSGT00390000009869"/>
<dbReference type="HOGENOM" id="CLU_100385_1_0_1"/>
<dbReference type="InParanoid" id="Q2TA39"/>
<dbReference type="OMA" id="WPPIQEL"/>
<dbReference type="OrthoDB" id="2417221at2759"/>
<dbReference type="TreeFam" id="TF332784"/>
<dbReference type="Reactome" id="R-BTA-72165">
    <property type="pathway name" value="mRNA Splicing - Minor Pathway"/>
</dbReference>
<dbReference type="Proteomes" id="UP000009136">
    <property type="component" value="Chromosome 17"/>
</dbReference>
<dbReference type="Bgee" id="ENSBTAG00000017890">
    <property type="expression patterns" value="Expressed in laryngeal cartilage and 103 other cell types or tissues"/>
</dbReference>
<dbReference type="GO" id="GO:0005689">
    <property type="term" value="C:U12-type spliceosomal complex"/>
    <property type="evidence" value="ECO:0000318"/>
    <property type="project" value="GO_Central"/>
</dbReference>
<dbReference type="GO" id="GO:0008270">
    <property type="term" value="F:zinc ion binding"/>
    <property type="evidence" value="ECO:0007669"/>
    <property type="project" value="UniProtKB-KW"/>
</dbReference>
<dbReference type="GO" id="GO:0006397">
    <property type="term" value="P:mRNA processing"/>
    <property type="evidence" value="ECO:0007669"/>
    <property type="project" value="UniProtKB-KW"/>
</dbReference>
<dbReference type="GO" id="GO:0008380">
    <property type="term" value="P:RNA splicing"/>
    <property type="evidence" value="ECO:0007669"/>
    <property type="project" value="UniProtKB-KW"/>
</dbReference>
<dbReference type="FunFam" id="3.30.160.60:FF:000741">
    <property type="entry name" value="Zinc finger matrin-type protein 5"/>
    <property type="match status" value="1"/>
</dbReference>
<dbReference type="FunFam" id="4.10.1000.10:FF:000025">
    <property type="entry name" value="Zinc finger matrin-type protein 5"/>
    <property type="match status" value="1"/>
</dbReference>
<dbReference type="Gene3D" id="3.30.160.60">
    <property type="entry name" value="Classic Zinc Finger"/>
    <property type="match status" value="1"/>
</dbReference>
<dbReference type="Gene3D" id="4.10.1000.10">
    <property type="entry name" value="Zinc finger, CCCH-type"/>
    <property type="match status" value="1"/>
</dbReference>
<dbReference type="InterPro" id="IPR013085">
    <property type="entry name" value="U1-CZ_Znf_C2H2"/>
</dbReference>
<dbReference type="InterPro" id="IPR036236">
    <property type="entry name" value="Znf_C2H2_sf"/>
</dbReference>
<dbReference type="InterPro" id="IPR000571">
    <property type="entry name" value="Znf_CCCH"/>
</dbReference>
<dbReference type="InterPro" id="IPR036855">
    <property type="entry name" value="Znf_CCCH_sf"/>
</dbReference>
<dbReference type="PANTHER" id="PTHR16465">
    <property type="entry name" value="NUCLEASE-RELATED"/>
    <property type="match status" value="1"/>
</dbReference>
<dbReference type="PANTHER" id="PTHR16465:SF0">
    <property type="entry name" value="ZINC FINGER MATRIN-TYPE PROTEIN 5"/>
    <property type="match status" value="1"/>
</dbReference>
<dbReference type="Pfam" id="PF00642">
    <property type="entry name" value="zf-CCCH"/>
    <property type="match status" value="1"/>
</dbReference>
<dbReference type="Pfam" id="PF06220">
    <property type="entry name" value="zf-U1"/>
    <property type="match status" value="1"/>
</dbReference>
<dbReference type="SMART" id="SM00356">
    <property type="entry name" value="ZnF_C3H1"/>
    <property type="match status" value="1"/>
</dbReference>
<dbReference type="SUPFAM" id="SSF57667">
    <property type="entry name" value="beta-beta-alpha zinc fingers"/>
    <property type="match status" value="1"/>
</dbReference>
<dbReference type="SUPFAM" id="SSF90229">
    <property type="entry name" value="CCCH zinc finger"/>
    <property type="match status" value="1"/>
</dbReference>
<dbReference type="PROSITE" id="PS50103">
    <property type="entry name" value="ZF_C3H1"/>
    <property type="match status" value="1"/>
</dbReference>
<reference key="1">
    <citation type="submission" date="2005-12" db="EMBL/GenBank/DDBJ databases">
        <authorList>
            <consortium name="NIH - Mammalian Gene Collection (MGC) project"/>
        </authorList>
    </citation>
    <scope>NUCLEOTIDE SEQUENCE [LARGE SCALE MRNA]</scope>
    <source>
        <strain>Crossbred X Angus</strain>
        <tissue>Liver</tissue>
    </source>
</reference>
<feature type="chain" id="PRO_0000254113" description="Zinc finger matrin-type protein 5">
    <location>
        <begin position="1"/>
        <end position="170"/>
    </location>
</feature>
<feature type="zinc finger region" description="C3H1-type" evidence="2">
    <location>
        <begin position="51"/>
        <end position="79"/>
    </location>
</feature>
<feature type="region of interest" description="Disordered" evidence="3">
    <location>
        <begin position="150"/>
        <end position="170"/>
    </location>
</feature>
<keyword id="KW-0479">Metal-binding</keyword>
<keyword id="KW-0507">mRNA processing</keyword>
<keyword id="KW-0508">mRNA splicing</keyword>
<keyword id="KW-0539">Nucleus</keyword>
<keyword id="KW-1185">Reference proteome</keyword>
<keyword id="KW-0747">Spliceosome</keyword>
<keyword id="KW-0862">Zinc</keyword>
<keyword id="KW-0863">Zinc-finger</keyword>
<evidence type="ECO:0000250" key="1"/>
<evidence type="ECO:0000255" key="2">
    <source>
        <dbReference type="PROSITE-ProRule" id="PRU00723"/>
    </source>
</evidence>
<evidence type="ECO:0000256" key="3">
    <source>
        <dbReference type="SAM" id="MobiDB-lite"/>
    </source>
</evidence>
<gene>
    <name type="primary">ZMAT5</name>
</gene>